<accession>B8M9H9</accession>
<comment type="function">
    <text evidence="2 7">Involved in degradation of plant cell walls. Hydrolyzes the feruloyl-arabinose ester bond in arabinoxylans as well as the feruloyl-galactose and feruloyl-arabinose ester bonds in pectin (By similarity). Active against methyl esters of caffeate (MCA), but not sinapate (MSA) (PubMed:15006424).</text>
</comment>
<comment type="catalytic activity">
    <reaction evidence="7">
        <text>feruloyl-polysaccharide + H2O = ferulate + polysaccharide.</text>
        <dbReference type="EC" id="3.1.1.73"/>
    </reaction>
</comment>
<comment type="subcellular location">
    <subcellularLocation>
        <location evidence="2">Secreted</location>
    </subcellularLocation>
</comment>
<comment type="similarity">
    <text evidence="9">Belongs to the carbohydrate esterase 1 (CE1) family. Feruloyl esterase type B subfamily.</text>
</comment>
<evidence type="ECO:0000250" key="1"/>
<evidence type="ECO:0000250" key="2">
    <source>
        <dbReference type="UniProtKB" id="O42807"/>
    </source>
</evidence>
<evidence type="ECO:0000250" key="3">
    <source>
        <dbReference type="UniProtKB" id="Q4WBW4"/>
    </source>
</evidence>
<evidence type="ECO:0000255" key="4">
    <source>
        <dbReference type="PROSITE-ProRule" id="PRU00498"/>
    </source>
</evidence>
<evidence type="ECO:0000255" key="5">
    <source>
        <dbReference type="PROSITE-ProRule" id="PRU00597"/>
    </source>
</evidence>
<evidence type="ECO:0000256" key="6">
    <source>
        <dbReference type="SAM" id="MobiDB-lite"/>
    </source>
</evidence>
<evidence type="ECO:0000269" key="7">
    <source>
    </source>
</evidence>
<evidence type="ECO:0000303" key="8">
    <source>
    </source>
</evidence>
<evidence type="ECO:0000305" key="9"/>
<dbReference type="EC" id="3.1.1.73" evidence="7"/>
<dbReference type="EMBL" id="EQ962655">
    <property type="protein sequence ID" value="EED17739.1"/>
    <property type="molecule type" value="Genomic_DNA"/>
</dbReference>
<dbReference type="RefSeq" id="XP_002481731.1">
    <property type="nucleotide sequence ID" value="XM_002481686.1"/>
</dbReference>
<dbReference type="SMR" id="B8M9H9"/>
<dbReference type="STRING" id="441959.B8M9H9"/>
<dbReference type="ESTHER" id="talsn-faeb">
    <property type="family name" value="Esterase_phb"/>
</dbReference>
<dbReference type="GlyCosmos" id="B8M9H9">
    <property type="glycosylation" value="2 sites, No reported glycans"/>
</dbReference>
<dbReference type="GeneID" id="8101347"/>
<dbReference type="VEuPathDB" id="FungiDB:TSTA_115370"/>
<dbReference type="eggNOG" id="ENOG502QTDU">
    <property type="taxonomic scope" value="Eukaryota"/>
</dbReference>
<dbReference type="HOGENOM" id="CLU_027551_1_1_1"/>
<dbReference type="InParanoid" id="B8M9H9"/>
<dbReference type="OMA" id="VMLKFFG"/>
<dbReference type="OrthoDB" id="2425929at2759"/>
<dbReference type="PhylomeDB" id="B8M9H9"/>
<dbReference type="Proteomes" id="UP000001745">
    <property type="component" value="Unassembled WGS sequence"/>
</dbReference>
<dbReference type="GO" id="GO:0005576">
    <property type="term" value="C:extracellular region"/>
    <property type="evidence" value="ECO:0007669"/>
    <property type="project" value="UniProtKB-SubCell"/>
</dbReference>
<dbReference type="GO" id="GO:0030248">
    <property type="term" value="F:cellulose binding"/>
    <property type="evidence" value="ECO:0007669"/>
    <property type="project" value="InterPro"/>
</dbReference>
<dbReference type="GO" id="GO:0030600">
    <property type="term" value="F:feruloyl esterase activity"/>
    <property type="evidence" value="ECO:0007669"/>
    <property type="project" value="UniProtKB-EC"/>
</dbReference>
<dbReference type="GO" id="GO:0045493">
    <property type="term" value="P:xylan catabolic process"/>
    <property type="evidence" value="ECO:0007669"/>
    <property type="project" value="UniProtKB-KW"/>
</dbReference>
<dbReference type="FunFam" id="3.40.50.1820:FF:000203">
    <property type="entry name" value="Feruloyl esterase B"/>
    <property type="match status" value="1"/>
</dbReference>
<dbReference type="Gene3D" id="3.40.50.1820">
    <property type="entry name" value="alpha/beta hydrolase"/>
    <property type="match status" value="1"/>
</dbReference>
<dbReference type="InterPro" id="IPR029058">
    <property type="entry name" value="AB_hydrolase_fold"/>
</dbReference>
<dbReference type="InterPro" id="IPR000254">
    <property type="entry name" value="Cellulose-bd_dom_fun"/>
</dbReference>
<dbReference type="InterPro" id="IPR010126">
    <property type="entry name" value="Esterase_phb"/>
</dbReference>
<dbReference type="InterPro" id="IPR050955">
    <property type="entry name" value="Plant_Biomass_Hydrol_Est"/>
</dbReference>
<dbReference type="NCBIfam" id="TIGR01840">
    <property type="entry name" value="esterase_phb"/>
    <property type="match status" value="1"/>
</dbReference>
<dbReference type="PANTHER" id="PTHR43037:SF3">
    <property type="entry name" value="FERULOYL ESTERASE B"/>
    <property type="match status" value="1"/>
</dbReference>
<dbReference type="PANTHER" id="PTHR43037">
    <property type="entry name" value="UNNAMED PRODUCT-RELATED"/>
    <property type="match status" value="1"/>
</dbReference>
<dbReference type="Pfam" id="PF00734">
    <property type="entry name" value="CBM_1"/>
    <property type="match status" value="1"/>
</dbReference>
<dbReference type="Pfam" id="PF10503">
    <property type="entry name" value="Esterase_PHB"/>
    <property type="match status" value="1"/>
</dbReference>
<dbReference type="SMART" id="SM00236">
    <property type="entry name" value="fCBD"/>
    <property type="match status" value="1"/>
</dbReference>
<dbReference type="SUPFAM" id="SSF53474">
    <property type="entry name" value="alpha/beta-Hydrolases"/>
    <property type="match status" value="2"/>
</dbReference>
<dbReference type="PROSITE" id="PS00562">
    <property type="entry name" value="CBM1_1"/>
    <property type="match status" value="1"/>
</dbReference>
<dbReference type="PROSITE" id="PS51164">
    <property type="entry name" value="CBM1_2"/>
    <property type="match status" value="1"/>
</dbReference>
<keyword id="KW-0119">Carbohydrate metabolism</keyword>
<keyword id="KW-0903">Direct protein sequencing</keyword>
<keyword id="KW-0325">Glycoprotein</keyword>
<keyword id="KW-0378">Hydrolase</keyword>
<keyword id="KW-0624">Polysaccharide degradation</keyword>
<keyword id="KW-1185">Reference proteome</keyword>
<keyword id="KW-0964">Secreted</keyword>
<keyword id="KW-0719">Serine esterase</keyword>
<keyword id="KW-0732">Signal</keyword>
<keyword id="KW-0858">Xylan degradation</keyword>
<proteinExistence type="evidence at protein level"/>
<gene>
    <name type="primary">faeB</name>
    <name type="ORF">TSTA_115370</name>
</gene>
<reference key="1">
    <citation type="journal article" date="2015" name="Genome Announc.">
        <title>Genome sequence of the AIDS-associated pathogen Penicillium marneffei (ATCC18224) and its near taxonomic relative Talaromyces stipitatus (ATCC10500).</title>
        <authorList>
            <person name="Nierman W.C."/>
            <person name="Fedorova-Abrams N.D."/>
            <person name="Andrianopoulos A."/>
        </authorList>
    </citation>
    <scope>NUCLEOTIDE SEQUENCE [LARGE SCALE GENOMIC DNA]</scope>
    <source>
        <strain>ATCC 10500 / CBS 375.48 / QM 6759 / NRRL 1006</strain>
    </source>
</reference>
<reference key="2">
    <citation type="journal article" date="2004" name="J. Biotechnol.">
        <title>The feruloyl esterase system of Talaromyces stipitatus: production of three discrete feruloyl esterases, including a novel enzyme, TsFaeC, with a broad substrate specificity.</title>
        <authorList>
            <person name="Garcia-Conesa M.T."/>
            <person name="Crepin V.F."/>
            <person name="Goldson A.J."/>
            <person name="Williamson G."/>
            <person name="Cummings N.J."/>
            <person name="Connerton I.F."/>
            <person name="Faulds C.B."/>
            <person name="Kroon P.A."/>
        </authorList>
    </citation>
    <scope>PROTEIN SEQUENCE OF 19-56; 185-211 AND 266-295</scope>
    <scope>FUNCTION</scope>
    <scope>CATALYTIC ACTIVITY</scope>
    <source>
        <strain>ATCC 10500 / CBS 375.48 / QM 6759 / NRRL 1006</strain>
    </source>
</reference>
<feature type="signal peptide" evidence="7">
    <location>
        <begin position="1"/>
        <end position="18"/>
    </location>
</feature>
<feature type="chain" id="PRO_0000433997" description="Feruloyl esterase B">
    <location>
        <begin position="19"/>
        <end position="358"/>
    </location>
</feature>
<feature type="domain" description="CBM1" evidence="5">
    <location>
        <begin position="322"/>
        <end position="358"/>
    </location>
</feature>
<feature type="region of interest" description="Catalytic" evidence="3">
    <location>
        <begin position="19"/>
        <end position="291"/>
    </location>
</feature>
<feature type="region of interest" description="Gly/Thr-rich linker" evidence="9">
    <location>
        <begin position="292"/>
        <end position="321"/>
    </location>
</feature>
<feature type="region of interest" description="Disordered" evidence="6">
    <location>
        <begin position="297"/>
        <end position="318"/>
    </location>
</feature>
<feature type="compositionally biased region" description="Low complexity" evidence="6">
    <location>
        <begin position="304"/>
        <end position="318"/>
    </location>
</feature>
<feature type="active site" description="Charge relay system" evidence="1">
    <location>
        <position position="136"/>
    </location>
</feature>
<feature type="glycosylation site" description="N-linked (GlcNAc...) asparagine" evidence="4">
    <location>
        <position position="179"/>
    </location>
</feature>
<feature type="glycosylation site" description="N-linked (GlcNAc...) asparagine" evidence="4">
    <location>
        <position position="246"/>
    </location>
</feature>
<protein>
    <recommendedName>
        <fullName evidence="8">Feruloyl esterase B</fullName>
        <ecNumber evidence="7">3.1.1.73</ecNumber>
    </recommendedName>
    <alternativeName>
        <fullName>Ferulic acid esterase B</fullName>
        <shortName>FAE</shortName>
    </alternativeName>
</protein>
<sequence>MAIPLVLLLAWLLPTVFAASLTQVSNFGDNPGSLQMYIYVPNNLASKPAIIVAMHPCGGSATQYYGMYDYHTPADQYGYILIYPSATRDLNCFDADTAASLTHNGGSDSLSIVNMVKYTISKYGADSSKVYMTGSSSGAIMTNVLAGTYPDVFAAGAAFSGMPFACLSGAGGADPAMSNQTCSRGQINHTPQEWAAYVHNAYPGYTGQYPRLQVWHGTADNVISYTDFNQEISQWTTVMGLSFTSNQTNTPLSGYTKMIYGDGSRFQAFSASGVGHFVPTDVSVVLDWFGITGGGGGNGGGSGSTTTTTSATTTSTGPTGGCTAAHWDQCGGNGYTGCTSCASPYTCQKVNDYYSQCL</sequence>
<organism>
    <name type="scientific">Talaromyces stipitatus (strain ATCC 10500 / CBS 375.48 / QM 6759 / NRRL 1006)</name>
    <name type="common">Penicillium stipitatum</name>
    <dbReference type="NCBI Taxonomy" id="441959"/>
    <lineage>
        <taxon>Eukaryota</taxon>
        <taxon>Fungi</taxon>
        <taxon>Dikarya</taxon>
        <taxon>Ascomycota</taxon>
        <taxon>Pezizomycotina</taxon>
        <taxon>Eurotiomycetes</taxon>
        <taxon>Eurotiomycetidae</taxon>
        <taxon>Eurotiales</taxon>
        <taxon>Trichocomaceae</taxon>
        <taxon>Talaromyces</taxon>
        <taxon>Talaromyces sect. Talaromyces</taxon>
    </lineage>
</organism>
<name>FAEB_TALSN</name>